<reference key="1">
    <citation type="journal article" date="2008" name="Genome Res.">
        <title>Comparative genome analysis of Salmonella enteritidis PT4 and Salmonella gallinarum 287/91 provides insights into evolutionary and host adaptation pathways.</title>
        <authorList>
            <person name="Thomson N.R."/>
            <person name="Clayton D.J."/>
            <person name="Windhorst D."/>
            <person name="Vernikos G."/>
            <person name="Davidson S."/>
            <person name="Churcher C."/>
            <person name="Quail M.A."/>
            <person name="Stevens M."/>
            <person name="Jones M.A."/>
            <person name="Watson M."/>
            <person name="Barron A."/>
            <person name="Layton A."/>
            <person name="Pickard D."/>
            <person name="Kingsley R.A."/>
            <person name="Bignell A."/>
            <person name="Clark L."/>
            <person name="Harris B."/>
            <person name="Ormond D."/>
            <person name="Abdellah Z."/>
            <person name="Brooks K."/>
            <person name="Cherevach I."/>
            <person name="Chillingworth T."/>
            <person name="Woodward J."/>
            <person name="Norberczak H."/>
            <person name="Lord A."/>
            <person name="Arrowsmith C."/>
            <person name="Jagels K."/>
            <person name="Moule S."/>
            <person name="Mungall K."/>
            <person name="Saunders M."/>
            <person name="Whitehead S."/>
            <person name="Chabalgoity J.A."/>
            <person name="Maskell D."/>
            <person name="Humphreys T."/>
            <person name="Roberts M."/>
            <person name="Barrow P.A."/>
            <person name="Dougan G."/>
            <person name="Parkhill J."/>
        </authorList>
    </citation>
    <scope>NUCLEOTIDE SEQUENCE [LARGE SCALE GENOMIC DNA]</scope>
    <source>
        <strain>287/91 / NCTC 13346</strain>
    </source>
</reference>
<keyword id="KW-0479">Metal-binding</keyword>
<keyword id="KW-0862">Zinc</keyword>
<gene>
    <name evidence="1" type="primary">yacG</name>
    <name type="ordered locus">SG0140A</name>
</gene>
<accession>B5RH76</accession>
<organism>
    <name type="scientific">Salmonella gallinarum (strain 287/91 / NCTC 13346)</name>
    <dbReference type="NCBI Taxonomy" id="550538"/>
    <lineage>
        <taxon>Bacteria</taxon>
        <taxon>Pseudomonadati</taxon>
        <taxon>Pseudomonadota</taxon>
        <taxon>Gammaproteobacteria</taxon>
        <taxon>Enterobacterales</taxon>
        <taxon>Enterobacteriaceae</taxon>
        <taxon>Salmonella</taxon>
    </lineage>
</organism>
<comment type="function">
    <text evidence="1">Inhibits all the catalytic activities of DNA gyrase by preventing its interaction with DNA. Acts by binding directly to the C-terminal domain of GyrB, which probably disrupts DNA binding by the gyrase.</text>
</comment>
<comment type="cofactor">
    <cofactor evidence="1">
        <name>Zn(2+)</name>
        <dbReference type="ChEBI" id="CHEBI:29105"/>
    </cofactor>
    <text evidence="1">Binds 1 zinc ion.</text>
</comment>
<comment type="subunit">
    <text evidence="1">Interacts with GyrB.</text>
</comment>
<comment type="similarity">
    <text evidence="1">Belongs to the DNA gyrase inhibitor YacG family.</text>
</comment>
<sequence>MSDVTVVNCPTCGKPVVWGEISPFRPFCSKRCQLIDLGEWAAEEKRIASSGDQSDSDDWSEER</sequence>
<name>YACG_SALG2</name>
<dbReference type="EMBL" id="AM933173">
    <property type="protein sequence ID" value="CAR36048.1"/>
    <property type="molecule type" value="Genomic_DNA"/>
</dbReference>
<dbReference type="RefSeq" id="WP_001286419.1">
    <property type="nucleotide sequence ID" value="NC_011274.1"/>
</dbReference>
<dbReference type="SMR" id="B5RH76"/>
<dbReference type="KEGG" id="seg:SG0140A"/>
<dbReference type="HOGENOM" id="CLU_178280_3_1_6"/>
<dbReference type="Proteomes" id="UP000008321">
    <property type="component" value="Chromosome"/>
</dbReference>
<dbReference type="GO" id="GO:0008657">
    <property type="term" value="F:DNA topoisomerase type II (double strand cut, ATP-hydrolyzing) inhibitor activity"/>
    <property type="evidence" value="ECO:0007669"/>
    <property type="project" value="UniProtKB-UniRule"/>
</dbReference>
<dbReference type="GO" id="GO:0008270">
    <property type="term" value="F:zinc ion binding"/>
    <property type="evidence" value="ECO:0007669"/>
    <property type="project" value="UniProtKB-UniRule"/>
</dbReference>
<dbReference type="GO" id="GO:0006355">
    <property type="term" value="P:regulation of DNA-templated transcription"/>
    <property type="evidence" value="ECO:0007669"/>
    <property type="project" value="InterPro"/>
</dbReference>
<dbReference type="Gene3D" id="3.30.50.10">
    <property type="entry name" value="Erythroid Transcription Factor GATA-1, subunit A"/>
    <property type="match status" value="1"/>
</dbReference>
<dbReference type="HAMAP" id="MF_00649">
    <property type="entry name" value="DNA_gyrase_inhibitor_YacG"/>
    <property type="match status" value="1"/>
</dbReference>
<dbReference type="InterPro" id="IPR005584">
    <property type="entry name" value="DNA_gyrase_inhibitor_YacG"/>
</dbReference>
<dbReference type="InterPro" id="IPR013088">
    <property type="entry name" value="Znf_NHR/GATA"/>
</dbReference>
<dbReference type="NCBIfam" id="NF001638">
    <property type="entry name" value="PRK00418.1"/>
    <property type="match status" value="1"/>
</dbReference>
<dbReference type="PANTHER" id="PTHR36150">
    <property type="entry name" value="DNA GYRASE INHIBITOR YACG"/>
    <property type="match status" value="1"/>
</dbReference>
<dbReference type="PANTHER" id="PTHR36150:SF1">
    <property type="entry name" value="DNA GYRASE INHIBITOR YACG"/>
    <property type="match status" value="1"/>
</dbReference>
<dbReference type="Pfam" id="PF03884">
    <property type="entry name" value="YacG"/>
    <property type="match status" value="1"/>
</dbReference>
<dbReference type="SUPFAM" id="SSF57716">
    <property type="entry name" value="Glucocorticoid receptor-like (DNA-binding domain)"/>
    <property type="match status" value="1"/>
</dbReference>
<protein>
    <recommendedName>
        <fullName evidence="1">DNA gyrase inhibitor YacG</fullName>
    </recommendedName>
</protein>
<proteinExistence type="inferred from homology"/>
<feature type="chain" id="PRO_1000130974" description="DNA gyrase inhibitor YacG">
    <location>
        <begin position="1"/>
        <end position="63"/>
    </location>
</feature>
<feature type="binding site" evidence="1">
    <location>
        <position position="9"/>
    </location>
    <ligand>
        <name>Zn(2+)</name>
        <dbReference type="ChEBI" id="CHEBI:29105"/>
    </ligand>
</feature>
<feature type="binding site" evidence="1">
    <location>
        <position position="12"/>
    </location>
    <ligand>
        <name>Zn(2+)</name>
        <dbReference type="ChEBI" id="CHEBI:29105"/>
    </ligand>
</feature>
<feature type="binding site" evidence="1">
    <location>
        <position position="28"/>
    </location>
    <ligand>
        <name>Zn(2+)</name>
        <dbReference type="ChEBI" id="CHEBI:29105"/>
    </ligand>
</feature>
<feature type="binding site" evidence="1">
    <location>
        <position position="32"/>
    </location>
    <ligand>
        <name>Zn(2+)</name>
        <dbReference type="ChEBI" id="CHEBI:29105"/>
    </ligand>
</feature>
<evidence type="ECO:0000255" key="1">
    <source>
        <dbReference type="HAMAP-Rule" id="MF_00649"/>
    </source>
</evidence>